<protein>
    <recommendedName>
        <fullName evidence="1">Ribosome maturation factor RimP</fullName>
    </recommendedName>
</protein>
<dbReference type="EMBL" id="CP000033">
    <property type="protein sequence ID" value="AAV43092.1"/>
    <property type="molecule type" value="Genomic_DNA"/>
</dbReference>
<dbReference type="RefSeq" id="WP_011254398.1">
    <property type="nucleotide sequence ID" value="NC_006814.3"/>
</dbReference>
<dbReference type="RefSeq" id="YP_194123.1">
    <property type="nucleotide sequence ID" value="NC_006814.3"/>
</dbReference>
<dbReference type="SMR" id="Q5FJN2"/>
<dbReference type="STRING" id="272621.LBA1260"/>
<dbReference type="GeneID" id="93289651"/>
<dbReference type="KEGG" id="lac:LBA1260"/>
<dbReference type="PATRIC" id="fig|272621.13.peg.1194"/>
<dbReference type="eggNOG" id="COG0779">
    <property type="taxonomic scope" value="Bacteria"/>
</dbReference>
<dbReference type="HOGENOM" id="CLU_070525_2_0_9"/>
<dbReference type="OrthoDB" id="9805006at2"/>
<dbReference type="BioCyc" id="LACI272621:G1G49-1242-MONOMER"/>
<dbReference type="Proteomes" id="UP000006381">
    <property type="component" value="Chromosome"/>
</dbReference>
<dbReference type="GO" id="GO:0005829">
    <property type="term" value="C:cytosol"/>
    <property type="evidence" value="ECO:0007669"/>
    <property type="project" value="TreeGrafter"/>
</dbReference>
<dbReference type="GO" id="GO:0000028">
    <property type="term" value="P:ribosomal small subunit assembly"/>
    <property type="evidence" value="ECO:0007669"/>
    <property type="project" value="TreeGrafter"/>
</dbReference>
<dbReference type="GO" id="GO:0006412">
    <property type="term" value="P:translation"/>
    <property type="evidence" value="ECO:0007669"/>
    <property type="project" value="TreeGrafter"/>
</dbReference>
<dbReference type="CDD" id="cd01734">
    <property type="entry name" value="YlxS_C"/>
    <property type="match status" value="1"/>
</dbReference>
<dbReference type="Gene3D" id="2.30.30.180">
    <property type="entry name" value="Ribosome maturation factor RimP, C-terminal domain"/>
    <property type="match status" value="1"/>
</dbReference>
<dbReference type="Gene3D" id="3.30.300.70">
    <property type="entry name" value="RimP-like superfamily, N-terminal"/>
    <property type="match status" value="1"/>
</dbReference>
<dbReference type="HAMAP" id="MF_01077">
    <property type="entry name" value="RimP"/>
    <property type="match status" value="1"/>
</dbReference>
<dbReference type="InterPro" id="IPR003728">
    <property type="entry name" value="Ribosome_maturation_RimP"/>
</dbReference>
<dbReference type="InterPro" id="IPR028998">
    <property type="entry name" value="RimP_C"/>
</dbReference>
<dbReference type="InterPro" id="IPR036847">
    <property type="entry name" value="RimP_C_sf"/>
</dbReference>
<dbReference type="InterPro" id="IPR028989">
    <property type="entry name" value="RimP_N"/>
</dbReference>
<dbReference type="InterPro" id="IPR035956">
    <property type="entry name" value="RimP_N_sf"/>
</dbReference>
<dbReference type="NCBIfam" id="NF000928">
    <property type="entry name" value="PRK00092.1-2"/>
    <property type="match status" value="1"/>
</dbReference>
<dbReference type="PANTHER" id="PTHR33867">
    <property type="entry name" value="RIBOSOME MATURATION FACTOR RIMP"/>
    <property type="match status" value="1"/>
</dbReference>
<dbReference type="PANTHER" id="PTHR33867:SF1">
    <property type="entry name" value="RIBOSOME MATURATION FACTOR RIMP"/>
    <property type="match status" value="1"/>
</dbReference>
<dbReference type="Pfam" id="PF17384">
    <property type="entry name" value="DUF150_C"/>
    <property type="match status" value="1"/>
</dbReference>
<dbReference type="Pfam" id="PF02576">
    <property type="entry name" value="RimP_N"/>
    <property type="match status" value="1"/>
</dbReference>
<dbReference type="SUPFAM" id="SSF74942">
    <property type="entry name" value="YhbC-like, C-terminal domain"/>
    <property type="match status" value="1"/>
</dbReference>
<dbReference type="SUPFAM" id="SSF75420">
    <property type="entry name" value="YhbC-like, N-terminal domain"/>
    <property type="match status" value="1"/>
</dbReference>
<sequence length="158" mass="18322">MSKVVNLVRPVVESIIDEHGDMLVNMEYIKEKSQNYLRIYVDREPNGIDIDEIAVLSELISEKLDTLDPDPLPDPYVLELSSPGAERPIKTKADWEKALNDYIHVGLYQKIEDKKMYEGTLKSYNDDEIILEVKDKTRRKTLTVPRKLIANIRFAIEF</sequence>
<evidence type="ECO:0000255" key="1">
    <source>
        <dbReference type="HAMAP-Rule" id="MF_01077"/>
    </source>
</evidence>
<comment type="function">
    <text evidence="1">Required for maturation of 30S ribosomal subunits.</text>
</comment>
<comment type="subcellular location">
    <subcellularLocation>
        <location evidence="1">Cytoplasm</location>
    </subcellularLocation>
</comment>
<comment type="similarity">
    <text evidence="1">Belongs to the RimP family.</text>
</comment>
<organism>
    <name type="scientific">Lactobacillus acidophilus (strain ATCC 700396 / NCK56 / N2 / NCFM)</name>
    <dbReference type="NCBI Taxonomy" id="272621"/>
    <lineage>
        <taxon>Bacteria</taxon>
        <taxon>Bacillati</taxon>
        <taxon>Bacillota</taxon>
        <taxon>Bacilli</taxon>
        <taxon>Lactobacillales</taxon>
        <taxon>Lactobacillaceae</taxon>
        <taxon>Lactobacillus</taxon>
    </lineage>
</organism>
<gene>
    <name evidence="1" type="primary">rimP</name>
    <name type="ordered locus">LBA1260</name>
</gene>
<feature type="chain" id="PRO_0000229245" description="Ribosome maturation factor RimP">
    <location>
        <begin position="1"/>
        <end position="158"/>
    </location>
</feature>
<keyword id="KW-0963">Cytoplasm</keyword>
<keyword id="KW-1185">Reference proteome</keyword>
<keyword id="KW-0690">Ribosome biogenesis</keyword>
<accession>Q5FJN2</accession>
<name>RIMP_LACAC</name>
<reference key="1">
    <citation type="journal article" date="2005" name="Proc. Natl. Acad. Sci. U.S.A.">
        <title>Complete genome sequence of the probiotic lactic acid bacterium Lactobacillus acidophilus NCFM.</title>
        <authorList>
            <person name="Altermann E."/>
            <person name="Russell W.M."/>
            <person name="Azcarate-Peril M.A."/>
            <person name="Barrangou R."/>
            <person name="Buck B.L."/>
            <person name="McAuliffe O."/>
            <person name="Souther N."/>
            <person name="Dobson A."/>
            <person name="Duong T."/>
            <person name="Callanan M."/>
            <person name="Lick S."/>
            <person name="Hamrick A."/>
            <person name="Cano R."/>
            <person name="Klaenhammer T.R."/>
        </authorList>
    </citation>
    <scope>NUCLEOTIDE SEQUENCE [LARGE SCALE GENOMIC DNA]</scope>
    <source>
        <strain>ATCC 700396 / NCK56 / N2 / NCFM</strain>
    </source>
</reference>
<proteinExistence type="inferred from homology"/>